<organism>
    <name type="scientific">Salmonella typhimurium (strain LT2 / SGSC1412 / ATCC 700720)</name>
    <dbReference type="NCBI Taxonomy" id="99287"/>
    <lineage>
        <taxon>Bacteria</taxon>
        <taxon>Pseudomonadati</taxon>
        <taxon>Pseudomonadota</taxon>
        <taxon>Gammaproteobacteria</taxon>
        <taxon>Enterobacterales</taxon>
        <taxon>Enterobacteriaceae</taxon>
        <taxon>Salmonella</taxon>
    </lineage>
</organism>
<name>FLIG_SALTY</name>
<keyword id="KW-0002">3D-structure</keyword>
<keyword id="KW-0975">Bacterial flagellum</keyword>
<keyword id="KW-0997">Cell inner membrane</keyword>
<keyword id="KW-1003">Cell membrane</keyword>
<keyword id="KW-0145">Chemotaxis</keyword>
<keyword id="KW-0283">Flagellar rotation</keyword>
<keyword id="KW-0472">Membrane</keyword>
<keyword id="KW-1185">Reference proteome</keyword>
<reference key="1">
    <citation type="journal article" date="1989" name="J. Bacteriol.">
        <title>Flagellar switch of Salmonella typhimurium: gene sequences and deduced protein sequences.</title>
        <authorList>
            <person name="Kihara M."/>
            <person name="Homma M."/>
            <person name="Kutsukake K."/>
            <person name="Macnab R.M."/>
        </authorList>
    </citation>
    <scope>NUCLEOTIDE SEQUENCE [GENOMIC DNA]</scope>
</reference>
<reference key="2">
    <citation type="journal article" date="2001" name="Nature">
        <title>Complete genome sequence of Salmonella enterica serovar Typhimurium LT2.</title>
        <authorList>
            <person name="McClelland M."/>
            <person name="Sanderson K.E."/>
            <person name="Spieth J."/>
            <person name="Clifton S.W."/>
            <person name="Latreille P."/>
            <person name="Courtney L."/>
            <person name="Porwollik S."/>
            <person name="Ali J."/>
            <person name="Dante M."/>
            <person name="Du F."/>
            <person name="Hou S."/>
            <person name="Layman D."/>
            <person name="Leonard S."/>
            <person name="Nguyen C."/>
            <person name="Scott K."/>
            <person name="Holmes A."/>
            <person name="Grewal N."/>
            <person name="Mulvaney E."/>
            <person name="Ryan E."/>
            <person name="Sun H."/>
            <person name="Florea L."/>
            <person name="Miller W."/>
            <person name="Stoneking T."/>
            <person name="Nhan M."/>
            <person name="Waterston R."/>
            <person name="Wilson R.K."/>
        </authorList>
    </citation>
    <scope>NUCLEOTIDE SEQUENCE [LARGE SCALE GENOMIC DNA]</scope>
    <source>
        <strain>LT2 / SGSC1412 / ATCC 700720</strain>
    </source>
</reference>
<reference key="3">
    <citation type="journal article" date="1991" name="J. Bacteriol.">
        <title>Salmonella typhimurium mutants defective in flagellar filament regrowth and sequence similarity of FliI to F0F1, vacuolar, and archaebacterial ATPase subunits.</title>
        <authorList>
            <person name="Vogler A.P."/>
            <person name="Homma M."/>
            <person name="Irikura V.M."/>
            <person name="Macnab R.M."/>
        </authorList>
    </citation>
    <scope>NUCLEOTIDE SEQUENCE [GENOMIC DNA] OF 297-331</scope>
</reference>
<reference key="4">
    <citation type="journal article" date="1992" name="Proc. Natl. Acad. Sci. U.S.A.">
        <title>Localization of the Salmonella typhimurium flagellar switch protein FliG to the cytoplasmic M-ring face of the basal body.</title>
        <authorList>
            <person name="Francis N.R."/>
            <person name="Irikura V.M."/>
            <person name="Yamaguchi S."/>
            <person name="Derosier D.J."/>
            <person name="Macnab R.M."/>
        </authorList>
    </citation>
    <scope>SUBCELLULAR LOCATION</scope>
</reference>
<comment type="function">
    <text evidence="1">FliG is one of three proteins (FliG, FliN, FliM) that forms the rotor-mounted switch complex (C ring), located at the base of the basal body. This complex interacts with the CheY and CheZ chemotaxis proteins, in addition to contacting components of the motor that determine the direction of flagellar rotation (By similarity).</text>
</comment>
<comment type="interaction">
    <interactant intactId="EBI-2012130">
        <id>P0A1J9</id>
    </interactant>
    <interactant intactId="EBI-2012119">
        <id>P15928</id>
        <label>fliF</label>
    </interactant>
    <organismsDiffer>false</organismsDiffer>
    <experiments>4</experiments>
</comment>
<comment type="subcellular location">
    <subcellularLocation>
        <location evidence="2">Cell inner membrane</location>
        <topology evidence="2">Peripheral membrane protein</topology>
        <orientation evidence="2">Cytoplasmic side</orientation>
    </subcellularLocation>
    <subcellularLocation>
        <location evidence="2">Bacterial flagellum basal body</location>
    </subcellularLocation>
</comment>
<comment type="similarity">
    <text evidence="3">Belongs to the FliG family.</text>
</comment>
<protein>
    <recommendedName>
        <fullName>Flagellar motor switch protein FliG</fullName>
    </recommendedName>
</protein>
<proteinExistence type="evidence at protein level"/>
<gene>
    <name type="primary">fliG</name>
    <name type="synonym">fla AII.2</name>
    <name type="synonym">fla BII</name>
    <name type="ordered locus">STM1970</name>
</gene>
<accession>P0A1J9</accession>
<accession>P15933</accession>
<dbReference type="EMBL" id="M24462">
    <property type="protein sequence ID" value="AAA27097.1"/>
    <property type="molecule type" value="Genomic_DNA"/>
</dbReference>
<dbReference type="EMBL" id="AE006468">
    <property type="protein sequence ID" value="AAL20882.1"/>
    <property type="molecule type" value="Genomic_DNA"/>
</dbReference>
<dbReference type="EMBL" id="M62408">
    <property type="protein sequence ID" value="AAA27099.1"/>
    <property type="molecule type" value="Genomic_DNA"/>
</dbReference>
<dbReference type="PIR" id="A44513">
    <property type="entry name" value="A30929"/>
</dbReference>
<dbReference type="RefSeq" id="NP_460923.1">
    <property type="nucleotide sequence ID" value="NC_003197.2"/>
</dbReference>
<dbReference type="RefSeq" id="WP_000067735.1">
    <property type="nucleotide sequence ID" value="NC_003197.2"/>
</dbReference>
<dbReference type="PDB" id="8UMD">
    <property type="method" value="EM"/>
    <property type="resolution" value="3.60 A"/>
    <property type="chains" value="B=1-331"/>
</dbReference>
<dbReference type="PDB" id="8UMX">
    <property type="method" value="EM"/>
    <property type="resolution" value="4.00 A"/>
    <property type="chains" value="B=1-331"/>
</dbReference>
<dbReference type="PDB" id="8UOX">
    <property type="method" value="EM"/>
    <property type="resolution" value="4.60 A"/>
    <property type="chains" value="B1/B2/B3/B4/B5/B6/B7/B8/B9/BA/BB/BC/BD/BE/BF/BG/BH/BI/BJ/BK/BL/BM/BN/BO/BP/BQ/BR/BS/BT/BU=1-331"/>
</dbReference>
<dbReference type="PDB" id="8UPL">
    <property type="method" value="EM"/>
    <property type="resolution" value="5.40 A"/>
    <property type="chains" value="B1/B2/B3/B4/B5/B6/B7/B8/B9/BA/BB/BC/BD/BE/BF/BG/BH/BI/BJ/BK/BL/BM/BN/BO/BP/BQ/BR/BS/BT/BU=1-331"/>
</dbReference>
<dbReference type="PDB" id="8VIB">
    <property type="method" value="EM"/>
    <property type="resolution" value="4.60 A"/>
    <property type="chains" value="G=1-331"/>
</dbReference>
<dbReference type="PDB" id="8VID">
    <property type="method" value="EM"/>
    <property type="resolution" value="5.90 A"/>
    <property type="chains" value="G=1-331"/>
</dbReference>
<dbReference type="PDB" id="8VKQ">
    <property type="method" value="EM"/>
    <property type="resolution" value="4.60 A"/>
    <property type="chains" value="AA/AD/AG/B/CC/CF/EB/EE/G/GA/GD/GG/IC/IF/J/KB/KE/MA/MD/MG/OC/OF/QB/QE/SA/SD/SG/T/UC/UF=1-331"/>
</dbReference>
<dbReference type="PDB" id="8VKR">
    <property type="method" value="EM"/>
    <property type="resolution" value="5.90 A"/>
    <property type="chains" value="AA/AD/AG/B/CC/CF/EB/EE/G/GA/GD/GG/IC/IF/J/KB/KE/MA/MD/MG/OC/OF/QB/QE/SA/SD/SG/T/UC/UF=1-331"/>
</dbReference>
<dbReference type="PDB" id="8WIW">
    <property type="method" value="EM"/>
    <property type="resolution" value="5.60 A"/>
    <property type="chains" value="3/8/A4/AM/AS/AY/Ae/Ak/Aq/Aw/B5/BA/BH/BO/BV/Bc/Bj/Bq/Bx/CB/CI/CP/CW/Cd/Ck/Cr/Cy/Z/a/b=1-331"/>
</dbReference>
<dbReference type="PDB" id="8WO5">
    <property type="method" value="EM"/>
    <property type="resolution" value="7.40 A"/>
    <property type="chains" value="B5/Ba/Bg/Bm/Bs/By/C6/CA/CG/CM/CS/CY/Ce/Ck/Cq/Cw/D1/D7/DB/DD/DJ/DQ/DW/Dc/Di/Do/Du/EE/EK/EQ=1-331"/>
</dbReference>
<dbReference type="PDB" id="8WOE">
    <property type="method" value="EM"/>
    <property type="resolution" value="4.30 A"/>
    <property type="chains" value="B5/Bc/Bj/Bq/Bx/C6/CB/CI/CP/CW/Cd/Ck/Cr/Cy/D3/D9/DA/DG/DY/De/Dk/Dq/Dw/E1/E2/E3/E4/EC/EJ/EQ=1-331"/>
</dbReference>
<dbReference type="PDB" id="8XP0">
    <property type="method" value="EM"/>
    <property type="resolution" value="4.00 A"/>
    <property type="chains" value="M/S/Y=1-331"/>
</dbReference>
<dbReference type="PDB" id="8XP1">
    <property type="method" value="EM"/>
    <property type="resolution" value="4.40 A"/>
    <property type="chains" value="Z/a/b=1-331"/>
</dbReference>
<dbReference type="PDB" id="8YJT">
    <property type="method" value="EM"/>
    <property type="resolution" value="5.90 A"/>
    <property type="chains" value="3/9/A1/A7/AE/AK/AQ/AW/Ac/Ai/Ao/Au/B5/BC/BI/BO/BU/Ba/Bg/Bm/Bs/By/CA/CG/CM/CS/CY/Ce/Ck/Cq=1-331"/>
</dbReference>
<dbReference type="PDB" id="9N49">
    <property type="method" value="EM"/>
    <property type="resolution" value="3.00 A"/>
    <property type="chains" value="G=1-331"/>
</dbReference>
<dbReference type="PDBsum" id="8UMD"/>
<dbReference type="PDBsum" id="8UMX"/>
<dbReference type="PDBsum" id="8UOX"/>
<dbReference type="PDBsum" id="8UPL"/>
<dbReference type="PDBsum" id="8VIB"/>
<dbReference type="PDBsum" id="8VID"/>
<dbReference type="PDBsum" id="8VKQ"/>
<dbReference type="PDBsum" id="8VKR"/>
<dbReference type="PDBsum" id="8WIW"/>
<dbReference type="PDBsum" id="8WO5"/>
<dbReference type="PDBsum" id="8WOE"/>
<dbReference type="PDBsum" id="8XP0"/>
<dbReference type="PDBsum" id="8XP1"/>
<dbReference type="PDBsum" id="8YJT"/>
<dbReference type="PDBsum" id="9N49"/>
<dbReference type="EMDB" id="EMD-37570"/>
<dbReference type="EMDB" id="EMD-37679"/>
<dbReference type="EMDB" id="EMD-37684"/>
<dbReference type="EMDB" id="EMD-38546"/>
<dbReference type="EMDB" id="EMD-38547"/>
<dbReference type="EMDB" id="EMD-39349"/>
<dbReference type="EMDB" id="EMD-42387"/>
<dbReference type="EMDB" id="EMD-42439"/>
<dbReference type="EMDB" id="EMD-42451"/>
<dbReference type="EMDB" id="EMD-48871"/>
<dbReference type="SMR" id="P0A1J9"/>
<dbReference type="IntAct" id="P0A1J9">
    <property type="interactions" value="1"/>
</dbReference>
<dbReference type="STRING" id="99287.STM1970"/>
<dbReference type="PaxDb" id="99287-STM1970"/>
<dbReference type="GeneID" id="1253491"/>
<dbReference type="KEGG" id="stm:STM1970"/>
<dbReference type="PATRIC" id="fig|99287.12.peg.2087"/>
<dbReference type="HOGENOM" id="CLU_047835_2_0_6"/>
<dbReference type="OMA" id="FIQDEHP"/>
<dbReference type="PhylomeDB" id="P0A1J9"/>
<dbReference type="BioCyc" id="SENT99287:STM1970-MONOMER"/>
<dbReference type="Proteomes" id="UP000001014">
    <property type="component" value="Chromosome"/>
</dbReference>
<dbReference type="GO" id="GO:0009425">
    <property type="term" value="C:bacterial-type flagellum basal body"/>
    <property type="evidence" value="ECO:0007669"/>
    <property type="project" value="UniProtKB-SubCell"/>
</dbReference>
<dbReference type="GO" id="GO:0005886">
    <property type="term" value="C:plasma membrane"/>
    <property type="evidence" value="ECO:0007669"/>
    <property type="project" value="UniProtKB-SubCell"/>
</dbReference>
<dbReference type="GO" id="GO:0003774">
    <property type="term" value="F:cytoskeletal motor activity"/>
    <property type="evidence" value="ECO:0007669"/>
    <property type="project" value="InterPro"/>
</dbReference>
<dbReference type="GO" id="GO:0071973">
    <property type="term" value="P:bacterial-type flagellum-dependent cell motility"/>
    <property type="evidence" value="ECO:0000315"/>
    <property type="project" value="CACAO"/>
</dbReference>
<dbReference type="GO" id="GO:0006935">
    <property type="term" value="P:chemotaxis"/>
    <property type="evidence" value="ECO:0007669"/>
    <property type="project" value="UniProtKB-KW"/>
</dbReference>
<dbReference type="FunFam" id="1.10.220.30:FF:000001">
    <property type="entry name" value="Flagellar motor switch protein FliG"/>
    <property type="match status" value="1"/>
</dbReference>
<dbReference type="FunFam" id="1.10.220.30:FF:000002">
    <property type="entry name" value="Flagellar motor switch protein FliG"/>
    <property type="match status" value="1"/>
</dbReference>
<dbReference type="Gene3D" id="1.10.220.30">
    <property type="match status" value="3"/>
</dbReference>
<dbReference type="InterPro" id="IPR000090">
    <property type="entry name" value="Flg_Motor_Flig"/>
</dbReference>
<dbReference type="InterPro" id="IPR023087">
    <property type="entry name" value="Flg_Motor_Flig_C"/>
</dbReference>
<dbReference type="InterPro" id="IPR011002">
    <property type="entry name" value="FliG_a-hlx"/>
</dbReference>
<dbReference type="InterPro" id="IPR032779">
    <property type="entry name" value="FliG_M"/>
</dbReference>
<dbReference type="InterPro" id="IPR028263">
    <property type="entry name" value="FliG_N"/>
</dbReference>
<dbReference type="NCBIfam" id="TIGR00207">
    <property type="entry name" value="fliG"/>
    <property type="match status" value="1"/>
</dbReference>
<dbReference type="PANTHER" id="PTHR30534">
    <property type="entry name" value="FLAGELLAR MOTOR SWITCH PROTEIN FLIG"/>
    <property type="match status" value="1"/>
</dbReference>
<dbReference type="PANTHER" id="PTHR30534:SF0">
    <property type="entry name" value="FLAGELLAR MOTOR SWITCH PROTEIN FLIG"/>
    <property type="match status" value="1"/>
</dbReference>
<dbReference type="Pfam" id="PF01706">
    <property type="entry name" value="FliG_C"/>
    <property type="match status" value="1"/>
</dbReference>
<dbReference type="Pfam" id="PF14841">
    <property type="entry name" value="FliG_M"/>
    <property type="match status" value="1"/>
</dbReference>
<dbReference type="Pfam" id="PF14842">
    <property type="entry name" value="FliG_N"/>
    <property type="match status" value="1"/>
</dbReference>
<dbReference type="PIRSF" id="PIRSF003161">
    <property type="entry name" value="FliG"/>
    <property type="match status" value="1"/>
</dbReference>
<dbReference type="PRINTS" id="PR00954">
    <property type="entry name" value="FLGMOTORFLIG"/>
</dbReference>
<dbReference type="SUPFAM" id="SSF48029">
    <property type="entry name" value="FliG"/>
    <property type="match status" value="2"/>
</dbReference>
<sequence>MSNLSGTDKSVILLMTIGEDRAAEVFKHLSTREVQALSTAMANVRQISNKQLTDVLSEFEQEAEQFAALNINANEYLRSVLVKALGEERASSLLEDILETRDTTSGIETLNFMEPQSAADLIRDEHPQIIATILVHLKRSQAADILALFDERLRHDVMLRIATFGGVQPAALAELTEVLNGLLDGQNLKRSKMGGVRTAAEIINLMKTQQEEAVITAVREFDGELAQKIIDEMFLFENLVDVDDRSIQRLLQEVDSESLLIALKGAEPPLREKFLRNMSQRAADILRDDLANRGPVRLSQVENEQKAILLIVRRLAETGEMVIGSGEDTYV</sequence>
<feature type="chain" id="PRO_0000184095" description="Flagellar motor switch protein FliG">
    <location>
        <begin position="1"/>
        <end position="331"/>
    </location>
</feature>
<feature type="short sequence motif" description="Part of the EHPQR-motif">
    <location>
        <begin position="125"/>
        <end position="128"/>
    </location>
</feature>
<feature type="site" description="Part of the EHPQR-motif">
    <location>
        <position position="160"/>
    </location>
</feature>
<evidence type="ECO:0000250" key="1"/>
<evidence type="ECO:0000269" key="2">
    <source>
    </source>
</evidence>
<evidence type="ECO:0000305" key="3"/>